<feature type="initiator methionine" description="Removed" evidence="31 39 41 42">
    <location>
        <position position="1"/>
    </location>
</feature>
<feature type="chain" id="PRO_0000152765" description="Lysine--tRNA ligase">
    <location>
        <begin position="2"/>
        <end position="597"/>
    </location>
</feature>
<feature type="region of interest" description="Disordered" evidence="3">
    <location>
        <begin position="1"/>
        <end position="71"/>
    </location>
</feature>
<feature type="compositionally biased region" description="Basic and acidic residues" evidence="3">
    <location>
        <begin position="9"/>
        <end position="45"/>
    </location>
</feature>
<feature type="compositionally biased region" description="Low complexity" evidence="3">
    <location>
        <begin position="51"/>
        <end position="60"/>
    </location>
</feature>
<feature type="binding site" evidence="10 19">
    <location>
        <position position="277"/>
    </location>
    <ligand>
        <name>substrate</name>
    </ligand>
</feature>
<feature type="binding site" evidence="10 15 19">
    <location>
        <position position="301"/>
    </location>
    <ligand>
        <name>substrate</name>
    </ligand>
</feature>
<feature type="binding site" evidence="10">
    <location>
        <begin position="323"/>
        <end position="325"/>
    </location>
    <ligand>
        <name>ATP</name>
        <dbReference type="ChEBI" id="CHEBI:30616"/>
    </ligand>
</feature>
<feature type="binding site" evidence="10">
    <location>
        <begin position="331"/>
        <end position="332"/>
    </location>
    <ligand>
        <name>ATP</name>
        <dbReference type="ChEBI" id="CHEBI:30616"/>
    </ligand>
</feature>
<feature type="binding site" evidence="10 15 19">
    <location>
        <position position="339"/>
    </location>
    <ligand>
        <name>substrate</name>
    </ligand>
</feature>
<feature type="binding site" evidence="10 15 19">
    <location>
        <position position="341"/>
    </location>
    <ligand>
        <name>substrate</name>
    </ligand>
</feature>
<feature type="binding site" evidence="10">
    <location>
        <begin position="494"/>
        <end position="495"/>
    </location>
    <ligand>
        <name>ATP</name>
        <dbReference type="ChEBI" id="CHEBI:30616"/>
    </ligand>
</feature>
<feature type="binding site" evidence="10 15 19">
    <location>
        <position position="497"/>
    </location>
    <ligand>
        <name>substrate</name>
    </ligand>
</feature>
<feature type="binding site" evidence="10 15 19">
    <location>
        <position position="501"/>
    </location>
    <ligand>
        <name>substrate</name>
    </ligand>
</feature>
<feature type="binding site" evidence="10">
    <location>
        <begin position="550"/>
        <end position="553"/>
    </location>
    <ligand>
        <name>ATP</name>
        <dbReference type="ChEBI" id="CHEBI:30616"/>
    </ligand>
</feature>
<feature type="modified residue" description="N-acetylalanine" evidence="31 39 41 42">
    <location>
        <position position="2"/>
    </location>
</feature>
<feature type="modified residue" description="N6-acetyllysine" evidence="40">
    <location>
        <position position="88"/>
    </location>
</feature>
<feature type="modified residue" description="N6-acetyllysine" evidence="40">
    <location>
        <position position="141"/>
    </location>
</feature>
<feature type="modified residue" description="Phosphoserine" evidence="13">
    <location>
        <position position="207"/>
    </location>
</feature>
<feature type="modified residue" description="Phosphoserine" evidence="2">
    <location>
        <position position="590"/>
    </location>
</feature>
<feature type="modified residue" description="Phosphothreonine" evidence="2">
    <location>
        <position position="591"/>
    </location>
</feature>
<feature type="modified residue" description="Phosphoserine" evidence="2">
    <location>
        <position position="596"/>
    </location>
</feature>
<feature type="splice variant" id="VSP_038481" description="In isoform Mitochondrial." evidence="32">
    <original>MAAVQAAEVKVDGSEPKLSKN</original>
    <variation>MLTQAAVRLVRGSLRKTSWAEWGHRELRLGQLAPFTAPHKDKSFSDQRS</variation>
    <location>
        <begin position="1"/>
        <end position="21"/>
    </location>
</feature>
<feature type="sequence variant" id="VAR_085386" description="In DEAPLE; uncertain significance; dbSNP:rs369114426." evidence="25">
    <original>R</original>
    <variation>H</variation>
    <location>
        <position position="80"/>
    </location>
</feature>
<feature type="sequence variant" id="VAR_064911" description="In CMTRIB; severely affects enzyme activity; dbSNP:rs267607194." evidence="14">
    <original>L</original>
    <variation>H</variation>
    <location>
        <position position="105"/>
    </location>
</feature>
<feature type="sequence variant" id="VAR_070233" description="In DFNB89; dbSNP:rs397514745." evidence="16">
    <original>Y</original>
    <variation>H</variation>
    <location>
        <position position="145"/>
    </location>
</feature>
<feature type="sequence variant" id="VAR_052640" description="In dbSNP:rs11557665.">
    <original>G</original>
    <variation>A</variation>
    <location>
        <position position="179"/>
    </location>
</feature>
<feature type="sequence variant" id="VAR_085387" description="In LEPID; does not rescue the developmental defects caused by KARS1 depletion in xenopus." evidence="24">
    <original>G</original>
    <variation>D</variation>
    <location>
        <position position="189"/>
    </location>
</feature>
<feature type="sequence variant" id="VAR_085388" description="In DEAPLE and LEPID; reduces interaction with AIMP2. Reduces tRNA-lysine aminoacylation; dbSNP:rs201650281." evidence="23 26">
    <original>P</original>
    <variation>L</variation>
    <location>
        <position position="200"/>
    </location>
</feature>
<feature type="sequence variant" id="VAR_085389" description="In DEAPLE; reduces interaction with AIMP2. Reduces tRNA-lysine aminoacylation; dbSNP:rs772410450." evidence="26">
    <original>F</original>
    <variation>V</variation>
    <location>
        <position position="263"/>
    </location>
</feature>
<feature type="sequence variant" id="VAR_064912" description="In CMTRIB; dbSNP:rs146955132." evidence="14">
    <original>I</original>
    <variation>M</variation>
    <location>
        <position position="274"/>
    </location>
</feature>
<feature type="sequence variant" id="VAR_070234" description="In DFNB89; dbSNP:rs397514746." evidence="16">
    <original>D</original>
    <variation>N</variation>
    <location>
        <position position="349"/>
    </location>
</feature>
<feature type="sequence variant" id="VAR_079741" description="Found in a patient with hypertrophic cardiomyopathy and mild intellectual disability together with proximal muscle weakness; uncertain significance." evidence="20">
    <original>L</original>
    <variation>H</variation>
    <location>
        <position position="350"/>
    </location>
</feature>
<feature type="sequence variant" id="VAR_079742" description="Found in a patient with hypertrophic cardiomyopathy and mild intellectual disability together with proximal muscle weakness; uncertain significance." evidence="20">
    <original>P</original>
    <variation>R</variation>
    <location>
        <position position="390"/>
    </location>
</feature>
<feature type="sequence variant" id="VAR_079743" description="In LEPID; uncertain significance; dbSNP:rs761527468." evidence="18">
    <original>R</original>
    <variation>W</variation>
    <location>
        <position position="438"/>
    </location>
</feature>
<feature type="sequence variant" id="VAR_085390" description="In DEAPLE; uncertain significance." evidence="25">
    <original>V</original>
    <variation>F</variation>
    <location>
        <position position="448"/>
    </location>
</feature>
<feature type="sequence variant" id="VAR_079744" description="In DEAPLE and LEPID; decreases tRNA-lysine aminoacylation; induces protein aggregation; releases from the subunit complex; no effect on cytoplasmic location; no effect on oligomerization; dbSNP:rs778748895." evidence="21 22">
    <original>R</original>
    <variation>H</variation>
    <location>
        <position position="477"/>
    </location>
</feature>
<feature type="sequence variant" id="VAR_079745" description="In DEAPLE; decreases tRNA-lysine aminoacylation; slightly induces protein aggregation; no effect on cytoplasmic location; no effect on oligomerization; dbSNP:rs1555512658." evidence="21">
    <original>P</original>
    <variation>S</variation>
    <location>
        <position position="505"/>
    </location>
</feature>
<feature type="sequence variant" id="VAR_079746" description="In LEPID; uncertain significance; dbSNP:rs770522582." evidence="18">
    <original>E</original>
    <variation>K</variation>
    <location>
        <position position="525"/>
    </location>
</feature>
<feature type="sequence variant" id="VAR_085391" description="In LEPID; decreases tRNA-lysine aminoacylation activity of both the mitochondrial and cytosolic forms. Does not rescue the developmental defects caused by KARS1 depletion in xenopus; dbSNP:rs768349236." evidence="24">
    <original>L</original>
    <variation>F</variation>
    <location>
        <position position="568"/>
    </location>
</feature>
<feature type="sequence variant" id="VAR_016105" description="In dbSNP:rs6834." evidence="4 14 28">
    <original>T</original>
    <variation>S</variation>
    <location>
        <position position="595"/>
    </location>
</feature>
<feature type="mutagenesis site" description="Loss of nuclear localization, but no effect on packaging into HIV-1." evidence="7">
    <location>
        <begin position="1"/>
        <end position="65"/>
    </location>
</feature>
<feature type="mutagenesis site" description="Disrupts interaction with AIMP2 and the multisynthase complex." evidence="15">
    <original>V</original>
    <variation>D</variation>
    <variation>R</variation>
    <variation>W</variation>
    <location>
        <position position="101"/>
    </location>
</feature>
<feature type="mutagenesis site" description="Strongly reduced production of diadenosine tetraphosphate (Ap4A). Reduced protein phosphorylation." evidence="13">
    <original>S</original>
    <variation>A</variation>
    <location>
        <position position="207"/>
    </location>
</feature>
<feature type="mutagenesis site" description="Phosphomimetic mutant that strongly enhances translocation into the nucleus and production of diadenosine tetraphosphate (Ap4A). Almost complete loss of tRNA ligase activity." evidence="15">
    <original>S</original>
    <variation>D</variation>
    <location>
        <position position="207"/>
    </location>
</feature>
<feature type="mutagenesis site" description="Strongly decreased tRNA ligase activity." evidence="15">
    <original>S</original>
    <variation>R</variation>
    <location>
        <position position="207"/>
    </location>
</feature>
<feature type="mutagenesis site" description="Almost complete loss of tRNA ligase activity." evidence="15">
    <original>S</original>
    <variation>Y</variation>
    <location>
        <position position="207"/>
    </location>
</feature>
<feature type="mutagenesis site" description="Induces protein aggregation. Releases from the subunit complex." evidence="21">
    <original>D</original>
    <variation>R</variation>
    <location>
        <position position="346"/>
    </location>
</feature>
<feature type="mutagenesis site" description="Disrupts interaction with AIMP2 and the multisynthase complex. Increases production of diadenosine tetraphosphate (Ap4A). Almost complete loss of tRNA ligase activity." evidence="15">
    <original>G</original>
    <variation>Y</variation>
    <location>
        <position position="540"/>
    </location>
</feature>
<feature type="helix" evidence="48">
    <location>
        <begin position="73"/>
        <end position="89"/>
    </location>
</feature>
<feature type="helix" evidence="48">
    <location>
        <begin position="105"/>
        <end position="112"/>
    </location>
</feature>
<feature type="strand" evidence="48">
    <location>
        <begin position="126"/>
        <end position="137"/>
    </location>
</feature>
<feature type="strand" evidence="48">
    <location>
        <begin position="139"/>
        <end position="149"/>
    </location>
</feature>
<feature type="strand" evidence="48">
    <location>
        <begin position="152"/>
        <end position="159"/>
    </location>
</feature>
<feature type="helix" evidence="48">
    <location>
        <begin position="160"/>
        <end position="162"/>
    </location>
</feature>
<feature type="helix" evidence="48">
    <location>
        <begin position="166"/>
        <end position="175"/>
    </location>
</feature>
<feature type="strand" evidence="48">
    <location>
        <begin position="181"/>
        <end position="190"/>
    </location>
</feature>
<feature type="strand" evidence="48">
    <location>
        <begin position="196"/>
        <end position="207"/>
    </location>
</feature>
<feature type="turn" evidence="45">
    <location>
        <begin position="216"/>
        <end position="218"/>
    </location>
</feature>
<feature type="helix" evidence="48">
    <location>
        <begin position="223"/>
        <end position="228"/>
    </location>
</feature>
<feature type="helix" evidence="48">
    <location>
        <begin position="230"/>
        <end position="236"/>
    </location>
</feature>
<feature type="helix" evidence="48">
    <location>
        <begin position="238"/>
        <end position="260"/>
    </location>
</feature>
<feature type="strand" evidence="48">
    <location>
        <begin position="270"/>
        <end position="274"/>
    </location>
</feature>
<feature type="strand" evidence="43">
    <location>
        <begin position="277"/>
        <end position="279"/>
    </location>
</feature>
<feature type="strand" evidence="48">
    <location>
        <begin position="284"/>
        <end position="287"/>
    </location>
</feature>
<feature type="turn" evidence="48">
    <location>
        <begin position="288"/>
        <end position="291"/>
    </location>
</feature>
<feature type="strand" evidence="48">
    <location>
        <begin position="292"/>
        <end position="296"/>
    </location>
</feature>
<feature type="helix" evidence="48">
    <location>
        <begin position="301"/>
        <end position="309"/>
    </location>
</feature>
<feature type="strand" evidence="48">
    <location>
        <begin position="314"/>
        <end position="322"/>
    </location>
</feature>
<feature type="strand" evidence="44">
    <location>
        <begin position="328"/>
        <end position="330"/>
    </location>
</feature>
<feature type="strand" evidence="48">
    <location>
        <begin position="333"/>
        <end position="343"/>
    </location>
</feature>
<feature type="helix" evidence="48">
    <location>
        <begin position="347"/>
        <end position="366"/>
    </location>
</feature>
<feature type="strand" evidence="48">
    <location>
        <begin position="367"/>
        <end position="373"/>
    </location>
</feature>
<feature type="strand" evidence="48">
    <location>
        <begin position="383"/>
        <end position="386"/>
    </location>
</feature>
<feature type="strand" evidence="48">
    <location>
        <begin position="392"/>
        <end position="395"/>
    </location>
</feature>
<feature type="helix" evidence="48">
    <location>
        <begin position="396"/>
        <end position="404"/>
    </location>
</feature>
<feature type="helix" evidence="43">
    <location>
        <begin position="411"/>
        <end position="413"/>
    </location>
</feature>
<feature type="helix" evidence="48">
    <location>
        <begin position="417"/>
        <end position="429"/>
    </location>
</feature>
<feature type="helix" evidence="48">
    <location>
        <begin position="440"/>
        <end position="451"/>
    </location>
</feature>
<feature type="helix" evidence="48">
    <location>
        <begin position="453"/>
        <end position="455"/>
    </location>
</feature>
<feature type="strand" evidence="48">
    <location>
        <begin position="460"/>
        <end position="463"/>
    </location>
</feature>
<feature type="helix" evidence="48">
    <location>
        <begin position="467"/>
        <end position="469"/>
    </location>
</feature>
<feature type="strand" evidence="48">
    <location>
        <begin position="477"/>
        <end position="479"/>
    </location>
</feature>
<feature type="strand" evidence="48">
    <location>
        <begin position="482"/>
        <end position="490"/>
    </location>
</feature>
<feature type="strand" evidence="48">
    <location>
        <begin position="493"/>
        <end position="501"/>
    </location>
</feature>
<feature type="helix" evidence="48">
    <location>
        <begin position="505"/>
        <end position="520"/>
    </location>
</feature>
<feature type="strand" evidence="46">
    <location>
        <begin position="524"/>
        <end position="526"/>
    </location>
</feature>
<feature type="helix" evidence="48">
    <location>
        <begin position="531"/>
        <end position="538"/>
    </location>
</feature>
<feature type="strand" evidence="48">
    <location>
        <begin position="543"/>
        <end position="550"/>
    </location>
</feature>
<feature type="helix" evidence="48">
    <location>
        <begin position="551"/>
        <end position="558"/>
    </location>
</feature>
<feature type="helix" evidence="48">
    <location>
        <begin position="564"/>
        <end position="567"/>
    </location>
</feature>
<feature type="strand" evidence="47">
    <location>
        <begin position="568"/>
        <end position="570"/>
    </location>
</feature>
<feature type="sequence conflict" description="In Ref. 2; AAG30114." evidence="33" ref="2">
    <original>R</original>
    <variation>G</variation>
    <location sequence="Q15046-2">
        <position position="48"/>
    </location>
</feature>
<name>SYK_HUMAN</name>
<sequence length="597" mass="68048">MAAVQAAEVKVDGSEPKLSKNELKRRLKAEKKVAEKEAKQKELSEKQLSQATAAATNHTTDNGVGPEEESVDPNQYYKIRSQAIHQLKVNGEDPYPHKFHVDISLTDFIQKYSHLQPGDHLTDITLKVAGRIHAKRASGGKLIFYDLRGEGVKLQVMANSRNYKSEEEFIHINNKLRRGDIIGVQGNPGKTKKGELSIIPYEITLLSPCLHMLPHLHFGLKDKETRYRQRYLDLILNDFVRQKFIIRSKIITYIRSFLDELGFLEIETPMMNIIPGGAVAKPFITYHNELDMNLYMRIAPELYHKMLVVGGIDRVYEIGRQFRNEGIDLTHNPEFTTCEFYMAYADYHDLMEITEKMVSGMVKHITGSYKVTYHPDGPEGQAYDVDFTPPFRRINMVEELEKALGMKLPETNLFETEETRKILDDICVAKAVECPPPRTTARLLDKLVGEFLEVTCINPTFICDHPQIMSPLAKWHRSKEGLTERFELFVMKKEICNAYTELNDPMRQRQLFEEQAKAKAAGDDEAMFIDENFCTALEYGLPPTAGWGMGIDRVAMFLTDSNNIKEVLLFPAMKPEDKKENVATTDTLESTTVGTSV</sequence>
<organism>
    <name type="scientific">Homo sapiens</name>
    <name type="common">Human</name>
    <dbReference type="NCBI Taxonomy" id="9606"/>
    <lineage>
        <taxon>Eukaryota</taxon>
        <taxon>Metazoa</taxon>
        <taxon>Chordata</taxon>
        <taxon>Craniata</taxon>
        <taxon>Vertebrata</taxon>
        <taxon>Euteleostomi</taxon>
        <taxon>Mammalia</taxon>
        <taxon>Eutheria</taxon>
        <taxon>Euarchontoglires</taxon>
        <taxon>Primates</taxon>
        <taxon>Haplorrhini</taxon>
        <taxon>Catarrhini</taxon>
        <taxon>Hominidae</taxon>
        <taxon>Homo</taxon>
    </lineage>
</organism>
<comment type="function">
    <text evidence="6 8 9 13 21 27 29">Catalyzes the specific attachment of an amino acid to its cognate tRNA in a 2 step reaction: the amino acid (AA) is first activated by ATP to form AA-AMP and then transferred to the acceptor end of the tRNA (PubMed:18029264, PubMed:18272479, PubMed:9278442). When secreted, acts as a signaling molecule that induces immune response through the activation of monocyte/macrophages (PubMed:15851690). Catalyzes the synthesis of the signaling molecule diadenosine tetraphosphate (Ap4A), and thereby mediates disruption of the complex between HINT1 and MITF and the concomitant activation of MITF transcriptional activity (PubMed:14975237, PubMed:19524539, PubMed:23159739, PubMed:5338216).</text>
</comment>
<comment type="function">
    <text evidence="7">(Microbial infection) Interacts with HIV-1 virus GAG protein, facilitating the selective packaging of tRNA(3)(Lys), the primer for reverse transcription initiation.</text>
</comment>
<comment type="catalytic activity">
    <reaction evidence="9 15 29">
        <text>tRNA(Lys) + L-lysine + ATP = L-lysyl-tRNA(Lys) + AMP + diphosphate</text>
        <dbReference type="Rhea" id="RHEA:20792"/>
        <dbReference type="Rhea" id="RHEA-COMP:9696"/>
        <dbReference type="Rhea" id="RHEA-COMP:9697"/>
        <dbReference type="ChEBI" id="CHEBI:30616"/>
        <dbReference type="ChEBI" id="CHEBI:32551"/>
        <dbReference type="ChEBI" id="CHEBI:33019"/>
        <dbReference type="ChEBI" id="CHEBI:78442"/>
        <dbReference type="ChEBI" id="CHEBI:78529"/>
        <dbReference type="ChEBI" id="CHEBI:456215"/>
        <dbReference type="EC" id="6.1.1.6"/>
    </reaction>
</comment>
<comment type="activity regulation">
    <text evidence="9">Up-regulated by DARS and EEF1A1, but not by AIMP2.</text>
</comment>
<comment type="biophysicochemical properties">
    <kinetics>
        <KM evidence="21">1.19 uM for tRNA(Lys)</KM>
        <text evidence="21">kcat is 0.31 sec(-1) for aminoacylation for tRNA(Lys).</text>
    </kinetics>
</comment>
<comment type="subunit">
    <text evidence="6 7 9 10 11 12 15 17 19 21 30">Homodimer and tetradimer (PubMed:18272479, PubMed:23159739, PubMed:26074468, PubMed:28887846). Part of the multisynthetase complex (MSC), a multisubunit complex that groups tRNA ligases for Arg (RARS), Asp (DARS), Gln (QARS), Ile (IARS), Leu (LARS), Lys (KARS), Met (MARS) the bifunctional ligase for Glu and Pro (EPRS) and the auxiliary subunits AIMP1/p43, AIMP2/p38 and EEF1E1/p18 (PubMed:19131329, PubMed:19289464, PubMed:23159739, PubMed:24312579). Interacts with AIMP2 (via N-terminus) and MITF (PubMed:14975237, PubMed:15220430, PubMed:23159739, PubMed:26074468, PubMed:31116475, PubMed:9878398). Interacts with TARSL2 (PubMed:24312579).</text>
</comment>
<comment type="subunit">
    <text evidence="5 7">(Microbial infection) Interacts directly with HIV-1 virus GAG protein (PubMed:12756246, PubMed:15220430).</text>
</comment>
<comment type="interaction">
    <interactant intactId="EBI-356367">
        <id>Q15046</id>
    </interactant>
    <interactant intactId="EBI-745226">
        <id>Q13155</id>
        <label>AIMP2</label>
    </interactant>
    <organismsDiffer>false</organismsDiffer>
    <experiments>23</experiments>
</comment>
<comment type="interaction">
    <interactant intactId="EBI-356367">
        <id>Q15046</id>
    </interactant>
    <interactant intactId="EBI-355315">
        <id>P07814</id>
        <label>EPRS1</label>
    </interactant>
    <organismsDiffer>false</organismsDiffer>
    <experiments>6</experiments>
</comment>
<comment type="interaction">
    <interactant intactId="EBI-356367">
        <id>Q15046</id>
    </interactant>
    <interactant intactId="EBI-356367">
        <id>Q15046</id>
        <label>KARS1</label>
    </interactant>
    <organismsDiffer>false</organismsDiffer>
    <experiments>6</experiments>
</comment>
<comment type="interaction">
    <interactant intactId="EBI-356367">
        <id>Q15046</id>
    </interactant>
    <interactant intactId="EBI-354112">
        <id>P08865</id>
        <label>RPSA</label>
    </interactant>
    <organismsDiffer>false</organismsDiffer>
    <experiments>9</experiments>
</comment>
<comment type="interaction">
    <interactant intactId="EBI-356367">
        <id>Q15046</id>
    </interactant>
    <interactant intactId="EBI-990792">
        <id>P00441</id>
        <label>SOD1</label>
    </interactant>
    <organismsDiffer>false</organismsDiffer>
    <experiments>3</experiments>
</comment>
<comment type="interaction">
    <interactant intactId="EBI-21457670">
        <id>Q15046-1</id>
    </interactant>
    <interactant intactId="EBI-745226">
        <id>Q13155</id>
        <label>AIMP2</label>
    </interactant>
    <organismsDiffer>false</organismsDiffer>
    <experiments>2</experiments>
</comment>
<comment type="subcellular location">
    <molecule>Isoform Cytoplasmic</molecule>
    <subcellularLocation>
        <location evidence="4 12 15 21">Cytoplasm</location>
        <location evidence="4 12 15 21">Cytosol</location>
    </subcellularLocation>
    <subcellularLocation>
        <location evidence="7">Cytoplasm</location>
    </subcellularLocation>
    <subcellularLocation>
        <location evidence="7 15">Nucleus</location>
    </subcellularLocation>
    <subcellularLocation>
        <location evidence="7">Cell membrane</location>
        <topology evidence="7">Peripheral membrane protein</topology>
    </subcellularLocation>
    <subcellularLocation>
        <location evidence="8">Secreted</location>
    </subcellularLocation>
    <text evidence="8 15">Secretion is induced by TNF-alpha (PubMed:15851690). Cytosolic in quiescent mast cells. Translocates into the nucleus in response to mast cell activation by immunoglobulin E (PubMed:23159739).</text>
</comment>
<comment type="subcellular location">
    <molecule>Isoform Mitochondrial</molecule>
    <subcellularLocation>
        <location evidence="4">Mitochondrion</location>
    </subcellularLocation>
</comment>
<comment type="alternative products">
    <event type="alternative splicing"/>
    <isoform>
        <id>Q15046-1</id>
        <name>Cytoplasmic</name>
        <sequence type="displayed"/>
    </isoform>
    <isoform>
        <id>Q15046-2</id>
        <name>Mitochondrial</name>
        <sequence type="described" ref="VSP_038481"/>
    </isoform>
</comment>
<comment type="domain">
    <text evidence="7 9">The N-terminal domain (1-65) of the cytoplasmic isoform is a functional tRNA-binding domain, is required for nuclear localization, is involved in the interaction with DARS, but has a repulsive role in the binding to EEF1A1. A central domain (208-259) is involved in homodimerization and is required for interaction with HIV-1 GAG and incorporation into virions. The C-terminal domain (452-597) is not required for interaction with AIMP2.</text>
</comment>
<comment type="PTM">
    <text evidence="1">Phosphorylated on a serine residue after mast cell stimulation with immunoglobulin E (IgE).</text>
</comment>
<comment type="disease" evidence="14">
    <disease id="DI-02946">
        <name>Charcot-Marie-Tooth disease, recessive intermediate B</name>
        <acronym>CMTRIB</acronym>
        <description>A form of Charcot-Marie-Tooth disease, a disorder of the peripheral nervous system, characterized by progressive weakness and atrophy, initially of the peroneal muscles and later of the distal muscles of the arms. Recessive intermediate forms of Charcot-Marie-Tooth disease are characterized by clinical and pathologic features intermediate between demyelinating and axonal peripheral neuropathies, and motor median nerve conduction velocities ranging from 25 to 45 m/sec.</description>
        <dbReference type="MIM" id="613641"/>
    </disease>
    <text>The disease is caused by variants affecting the gene represented in this entry.</text>
</comment>
<comment type="disease" evidence="16">
    <disease id="DI-03865">
        <name>Deafness, autosomal recessive, 89</name>
        <acronym>DFNB89</acronym>
        <description>A form of non-syndromic deafness characterized by bilateral, prelingual, moderate to severe hearing loss affecting all frequencies.</description>
        <dbReference type="MIM" id="613916"/>
    </disease>
    <text>The disease is caused by variants affecting the gene represented in this entry.</text>
</comment>
<comment type="disease" evidence="21 25 26">
    <disease id="DI-06032">
        <name>Deafness, congenital, and adult-onset progressive leukoencephalopathy</name>
        <acronym>DEAPLE</acronym>
        <description>An autosomal recessive, complex neurodegenerative disorder characterized by congenital sensorineural deafness, and progressive motor and cognitive decline apparent in young adulthood. Brain imaging shows diffuse white matter abnormalities affecting various brain regions, consistent with a progressive leukoencephalopathy. More variable additional features may include visual impairment and axonal peripheral neuropathy. Premature death may occurr in some patients.</description>
        <dbReference type="MIM" id="619196"/>
    </disease>
    <text>The disease is caused by variants affecting the gene represented in this entry.</text>
</comment>
<comment type="disease" evidence="18 22 23 24">
    <disease id="DI-06031">
        <name>Leukoencephalopathy, progressive, infantile-onset, with or without deafness</name>
        <acronym>LEPID</acronym>
        <description>An autosomal recessive, complex neurodegenerative disorder apparent from infancy. LEPID is characterized by early-onset progressive leukoencephalopathy with brainstem and spinal cord calcifications, sensorineural deafness in most patients, global developmental delay with cognitive impairment and poor or absent speech, developmental regression, and neurologic deterioration. Additional more variable features may include poor overall growth with microcephaly, seizures, visual loss, microcytic anemia, and hepatic enlargement or abnormal liver enzymes. Premature death is common.</description>
        <dbReference type="MIM" id="619147"/>
    </disease>
    <text>The disease is caused by variants affecting the gene represented in this entry.</text>
</comment>
<comment type="miscellaneous">
    <text evidence="34">Shares a bidirectional promoter with TERF2IP/RAP1.</text>
</comment>
<comment type="miscellaneous">
    <molecule>Isoform Mitochondrial</molecule>
    <text evidence="33">Mitochondrial precursor. Contains a mitochondrial transit peptide at positions 1-16.</text>
</comment>
<comment type="similarity">
    <text evidence="33">Belongs to the class-II aminoacyl-tRNA synthetase family.</text>
</comment>
<comment type="sequence caution" evidence="33">
    <conflict type="erroneous initiation">
        <sequence resource="EMBL-CDS" id="BAA06688"/>
    </conflict>
    <text>Extended N-terminus.</text>
</comment>
<evidence type="ECO:0000250" key="1">
    <source>
        <dbReference type="UniProtKB" id="Q5XIM7"/>
    </source>
</evidence>
<evidence type="ECO:0000250" key="2">
    <source>
        <dbReference type="UniProtKB" id="Q99MN1"/>
    </source>
</evidence>
<evidence type="ECO:0000256" key="3">
    <source>
        <dbReference type="SAM" id="MobiDB-lite"/>
    </source>
</evidence>
<evidence type="ECO:0000269" key="4">
    <source>
    </source>
</evidence>
<evidence type="ECO:0000269" key="5">
    <source>
    </source>
</evidence>
<evidence type="ECO:0000269" key="6">
    <source>
    </source>
</evidence>
<evidence type="ECO:0000269" key="7">
    <source>
    </source>
</evidence>
<evidence type="ECO:0000269" key="8">
    <source>
    </source>
</evidence>
<evidence type="ECO:0000269" key="9">
    <source>
    </source>
</evidence>
<evidence type="ECO:0000269" key="10">
    <source>
    </source>
</evidence>
<evidence type="ECO:0000269" key="11">
    <source>
    </source>
</evidence>
<evidence type="ECO:0000269" key="12">
    <source>
    </source>
</evidence>
<evidence type="ECO:0000269" key="13">
    <source>
    </source>
</evidence>
<evidence type="ECO:0000269" key="14">
    <source>
    </source>
</evidence>
<evidence type="ECO:0000269" key="15">
    <source>
    </source>
</evidence>
<evidence type="ECO:0000269" key="16">
    <source>
    </source>
</evidence>
<evidence type="ECO:0000269" key="17">
    <source>
    </source>
</evidence>
<evidence type="ECO:0000269" key="18">
    <source>
    </source>
</evidence>
<evidence type="ECO:0000269" key="19">
    <source>
    </source>
</evidence>
<evidence type="ECO:0000269" key="20">
    <source>
    </source>
</evidence>
<evidence type="ECO:0000269" key="21">
    <source>
    </source>
</evidence>
<evidence type="ECO:0000269" key="22">
    <source>
    </source>
</evidence>
<evidence type="ECO:0000269" key="23">
    <source>
    </source>
</evidence>
<evidence type="ECO:0000269" key="24">
    <source>
    </source>
</evidence>
<evidence type="ECO:0000269" key="25">
    <source>
    </source>
</evidence>
<evidence type="ECO:0000269" key="26">
    <source>
    </source>
</evidence>
<evidence type="ECO:0000269" key="27">
    <source>
    </source>
</evidence>
<evidence type="ECO:0000269" key="28">
    <source>
    </source>
</evidence>
<evidence type="ECO:0000269" key="29">
    <source>
    </source>
</evidence>
<evidence type="ECO:0000269" key="30">
    <source>
    </source>
</evidence>
<evidence type="ECO:0000269" key="31">
    <source ref="7"/>
</evidence>
<evidence type="ECO:0000303" key="32">
    <source>
    </source>
</evidence>
<evidence type="ECO:0000305" key="33"/>
<evidence type="ECO:0000305" key="34">
    <source>
    </source>
</evidence>
<evidence type="ECO:0000312" key="35">
    <source>
        <dbReference type="HGNC" id="HGNC:6215"/>
    </source>
</evidence>
<evidence type="ECO:0007744" key="36">
    <source>
        <dbReference type="PDB" id="4DPG"/>
    </source>
</evidence>
<evidence type="ECO:0007744" key="37">
    <source>
        <dbReference type="PDB" id="4YCU"/>
    </source>
</evidence>
<evidence type="ECO:0007744" key="38">
    <source>
        <dbReference type="PDB" id="4YCW"/>
    </source>
</evidence>
<evidence type="ECO:0007744" key="39">
    <source>
    </source>
</evidence>
<evidence type="ECO:0007744" key="40">
    <source>
    </source>
</evidence>
<evidence type="ECO:0007744" key="41">
    <source>
    </source>
</evidence>
<evidence type="ECO:0007744" key="42">
    <source>
    </source>
</evidence>
<evidence type="ECO:0007829" key="43">
    <source>
        <dbReference type="PDB" id="3BJU"/>
    </source>
</evidence>
<evidence type="ECO:0007829" key="44">
    <source>
        <dbReference type="PDB" id="4DPG"/>
    </source>
</evidence>
<evidence type="ECO:0007829" key="45">
    <source>
        <dbReference type="PDB" id="4YCU"/>
    </source>
</evidence>
<evidence type="ECO:0007829" key="46">
    <source>
        <dbReference type="PDB" id="4YCW"/>
    </source>
</evidence>
<evidence type="ECO:0007829" key="47">
    <source>
        <dbReference type="PDB" id="6CHD"/>
    </source>
</evidence>
<evidence type="ECO:0007829" key="48">
    <source>
        <dbReference type="PDB" id="6ILD"/>
    </source>
</evidence>
<proteinExistence type="evidence at protein level"/>
<reference key="1">
    <citation type="journal article" date="1997" name="J. Biol. Chem.">
        <title>Human lysyl-tRNA synthetase accepts nucleotide 73 variants and rescues Escherichia coli double-defective mutant.</title>
        <authorList>
            <person name="Shiba K."/>
            <person name="Stello T."/>
            <person name="Motegi H."/>
            <person name="Noda T."/>
            <person name="Musier-Forsyth K."/>
            <person name="Schimmel P."/>
        </authorList>
    </citation>
    <scope>NUCLEOTIDE SEQUENCE [MRNA] (ISOFORM CYTOPLASMIC)</scope>
    <scope>FUNCTION</scope>
    <scope>CATALYTIC ACTIVITY</scope>
    <source>
        <tissue>Brain</tissue>
    </source>
</reference>
<reference key="2">
    <citation type="journal article" date="2000" name="J. Biol. Chem.">
        <title>The human lysyl-tRNA synthetase gene encodes both the cytoplasmic and mitochondrial enzymes by means of an unusual alternative splicing of the primary transcript.</title>
        <authorList>
            <person name="Tolkunova E."/>
            <person name="Park H."/>
            <person name="Xia J."/>
            <person name="King M.P."/>
            <person name="Davidson E."/>
        </authorList>
    </citation>
    <scope>NUCLEOTIDE SEQUENCE [MRNA] (ISOFORM MITOCHONDRIAL)</scope>
    <scope>SUBCELLULAR LOCATION</scope>
    <scope>VARIANT SER-595</scope>
</reference>
<reference key="3">
    <citation type="journal article" date="1994" name="DNA Res.">
        <title>Prediction of the coding sequences of unidentified human genes. II. The coding sequences of 40 new genes (KIAA0041-KIAA0080) deduced by analysis of cDNA clones from human cell line KG-1.</title>
        <authorList>
            <person name="Nomura N."/>
            <person name="Nagase T."/>
            <person name="Miyajima N."/>
            <person name="Sazuka T."/>
            <person name="Tanaka A."/>
            <person name="Sato S."/>
            <person name="Seki N."/>
            <person name="Kawarabayasi Y."/>
            <person name="Ishikawa K."/>
            <person name="Tabata S."/>
        </authorList>
    </citation>
    <scope>NUCLEOTIDE SEQUENCE [LARGE SCALE MRNA] (ISOFORM CYTOPLASMIC)</scope>
    <scope>VARIANT SER-595</scope>
    <source>
        <tissue>Bone marrow</tissue>
    </source>
</reference>
<reference key="4">
    <citation type="journal article" date="2004" name="Nature">
        <title>The sequence and analysis of duplication-rich human chromosome 16.</title>
        <authorList>
            <person name="Martin J."/>
            <person name="Han C."/>
            <person name="Gordon L.A."/>
            <person name="Terry A."/>
            <person name="Prabhakar S."/>
            <person name="She X."/>
            <person name="Xie G."/>
            <person name="Hellsten U."/>
            <person name="Chan Y.M."/>
            <person name="Altherr M."/>
            <person name="Couronne O."/>
            <person name="Aerts A."/>
            <person name="Bajorek E."/>
            <person name="Black S."/>
            <person name="Blumer H."/>
            <person name="Branscomb E."/>
            <person name="Brown N.C."/>
            <person name="Bruno W.J."/>
            <person name="Buckingham J.M."/>
            <person name="Callen D.F."/>
            <person name="Campbell C.S."/>
            <person name="Campbell M.L."/>
            <person name="Campbell E.W."/>
            <person name="Caoile C."/>
            <person name="Challacombe J.F."/>
            <person name="Chasteen L.A."/>
            <person name="Chertkov O."/>
            <person name="Chi H.C."/>
            <person name="Christensen M."/>
            <person name="Clark L.M."/>
            <person name="Cohn J.D."/>
            <person name="Denys M."/>
            <person name="Detter J.C."/>
            <person name="Dickson M."/>
            <person name="Dimitrijevic-Bussod M."/>
            <person name="Escobar J."/>
            <person name="Fawcett J.J."/>
            <person name="Flowers D."/>
            <person name="Fotopulos D."/>
            <person name="Glavina T."/>
            <person name="Gomez M."/>
            <person name="Gonzales E."/>
            <person name="Goodstein D."/>
            <person name="Goodwin L.A."/>
            <person name="Grady D.L."/>
            <person name="Grigoriev I."/>
            <person name="Groza M."/>
            <person name="Hammon N."/>
            <person name="Hawkins T."/>
            <person name="Haydu L."/>
            <person name="Hildebrand C.E."/>
            <person name="Huang W."/>
            <person name="Israni S."/>
            <person name="Jett J."/>
            <person name="Jewett P.B."/>
            <person name="Kadner K."/>
            <person name="Kimball H."/>
            <person name="Kobayashi A."/>
            <person name="Krawczyk M.-C."/>
            <person name="Leyba T."/>
            <person name="Longmire J.L."/>
            <person name="Lopez F."/>
            <person name="Lou Y."/>
            <person name="Lowry S."/>
            <person name="Ludeman T."/>
            <person name="Manohar C.F."/>
            <person name="Mark G.A."/>
            <person name="McMurray K.L."/>
            <person name="Meincke L.J."/>
            <person name="Morgan J."/>
            <person name="Moyzis R.K."/>
            <person name="Mundt M.O."/>
            <person name="Munk A.C."/>
            <person name="Nandkeshwar R.D."/>
            <person name="Pitluck S."/>
            <person name="Pollard M."/>
            <person name="Predki P."/>
            <person name="Parson-Quintana B."/>
            <person name="Ramirez L."/>
            <person name="Rash S."/>
            <person name="Retterer J."/>
            <person name="Ricke D.O."/>
            <person name="Robinson D.L."/>
            <person name="Rodriguez A."/>
            <person name="Salamov A."/>
            <person name="Saunders E.H."/>
            <person name="Scott D."/>
            <person name="Shough T."/>
            <person name="Stallings R.L."/>
            <person name="Stalvey M."/>
            <person name="Sutherland R.D."/>
            <person name="Tapia R."/>
            <person name="Tesmer J.G."/>
            <person name="Thayer N."/>
            <person name="Thompson L.S."/>
            <person name="Tice H."/>
            <person name="Torney D.C."/>
            <person name="Tran-Gyamfi M."/>
            <person name="Tsai M."/>
            <person name="Ulanovsky L.E."/>
            <person name="Ustaszewska A."/>
            <person name="Vo N."/>
            <person name="White P.S."/>
            <person name="Williams A.L."/>
            <person name="Wills P.L."/>
            <person name="Wu J.-R."/>
            <person name="Wu K."/>
            <person name="Yang J."/>
            <person name="DeJong P."/>
            <person name="Bruce D."/>
            <person name="Doggett N.A."/>
            <person name="Deaven L."/>
            <person name="Schmutz J."/>
            <person name="Grimwood J."/>
            <person name="Richardson P."/>
            <person name="Rokhsar D.S."/>
            <person name="Eichler E.E."/>
            <person name="Gilna P."/>
            <person name="Lucas S.M."/>
            <person name="Myers R.M."/>
            <person name="Rubin E.M."/>
            <person name="Pennacchio L.A."/>
        </authorList>
    </citation>
    <scope>NUCLEOTIDE SEQUENCE [LARGE SCALE GENOMIC DNA]</scope>
</reference>
<reference key="5">
    <citation type="submission" date="2005-09" db="EMBL/GenBank/DDBJ databases">
        <authorList>
            <person name="Mural R.J."/>
            <person name="Istrail S."/>
            <person name="Sutton G.G."/>
            <person name="Florea L."/>
            <person name="Halpern A.L."/>
            <person name="Mobarry C.M."/>
            <person name="Lippert R."/>
            <person name="Walenz B."/>
            <person name="Shatkay H."/>
            <person name="Dew I."/>
            <person name="Miller J.R."/>
            <person name="Flanigan M.J."/>
            <person name="Edwards N.J."/>
            <person name="Bolanos R."/>
            <person name="Fasulo D."/>
            <person name="Halldorsson B.V."/>
            <person name="Hannenhalli S."/>
            <person name="Turner R."/>
            <person name="Yooseph S."/>
            <person name="Lu F."/>
            <person name="Nusskern D.R."/>
            <person name="Shue B.C."/>
            <person name="Zheng X.H."/>
            <person name="Zhong F."/>
            <person name="Delcher A.L."/>
            <person name="Huson D.H."/>
            <person name="Kravitz S.A."/>
            <person name="Mouchard L."/>
            <person name="Reinert K."/>
            <person name="Remington K.A."/>
            <person name="Clark A.G."/>
            <person name="Waterman M.S."/>
            <person name="Eichler E.E."/>
            <person name="Adams M.D."/>
            <person name="Hunkapiller M.W."/>
            <person name="Myers E.W."/>
            <person name="Venter J.C."/>
        </authorList>
    </citation>
    <scope>NUCLEOTIDE SEQUENCE [LARGE SCALE GENOMIC DNA]</scope>
</reference>
<reference key="6">
    <citation type="journal article" date="2004" name="Genome Res.">
        <title>The status, quality, and expansion of the NIH full-length cDNA project: the Mammalian Gene Collection (MGC).</title>
        <authorList>
            <consortium name="The MGC Project Team"/>
        </authorList>
    </citation>
    <scope>NUCLEOTIDE SEQUENCE [LARGE SCALE MRNA] (ISOFORM CYTOPLASMIC)</scope>
    <source>
        <tissue>Placenta</tissue>
    </source>
</reference>
<reference key="7">
    <citation type="submission" date="2007-07" db="UniProtKB">
        <authorList>
            <person name="Bienvenut W.V."/>
            <person name="Boldt K."/>
            <person name="von Kriegsheim A.F."/>
            <person name="Kolch W."/>
        </authorList>
    </citation>
    <scope>PROTEIN SEQUENCE OF 2-10; 112-127; 142-148; 231-241; 306-314 AND 486-492</scope>
    <scope>CLEAVAGE OF INITIATOR METHIONINE</scope>
    <scope>ACETYLATION AT ALA-2</scope>
    <scope>IDENTIFICATION BY MASS SPECTROMETRY (ISOFORM CYTOPLASMIC)</scope>
    <source>
        <tissue>Hepatoma</tissue>
    </source>
</reference>
<reference key="8">
    <citation type="journal article" date="1966" name="Biochem. Biophys. Res. Commun.">
        <title>Enzymatic synthesis of diadenosine tetraphosphate and diadenosine triphosphate with a purified lysyl-tRNA synthetase.</title>
        <authorList>
            <person name="Zamecnik P.C."/>
            <person name="Stephenson M.L."/>
            <person name="Janeway C.M."/>
            <person name="Randerath K."/>
        </authorList>
    </citation>
    <scope>FUNCTION</scope>
    <scope>CATALYTIC ACTIVITY</scope>
</reference>
<reference key="9">
    <citation type="journal article" date="1999" name="J. Mol. Biol.">
        <title>Macromolecular assemblage of aminoacyl-tRNA synthetases: identification of protein-protein interactions and characterization of a core protein.</title>
        <authorList>
            <person name="Quevillon S."/>
            <person name="Robinson J.-C."/>
            <person name="Berthonneau E."/>
            <person name="Siatecka M."/>
            <person name="Mirande M."/>
        </authorList>
    </citation>
    <scope>INTERACTION WITH AIMP2</scope>
</reference>
<reference key="10">
    <citation type="journal article" date="2003" name="Gene">
        <title>The telomeric protein Rap1 is conserved in vertebrates and is expressed from a bidirectional promoter positioned between the Rap1 and KARS genes.</title>
        <authorList>
            <person name="Tan M."/>
            <person name="Wei C."/>
            <person name="Price C.M."/>
        </authorList>
    </citation>
    <scope>BIDIRECTIONAL PROMOTER WITH TERF2IP</scope>
</reference>
<reference key="11">
    <citation type="journal article" date="2004" name="Immunity">
        <title>The function of lysyl-tRNA synthetase and Ap4A as signaling regulators of MITF activity in FcepsilonRI-activated mast cells.</title>
        <authorList>
            <person name="Lee Y.N."/>
            <person name="Nechushtan H."/>
            <person name="Figov N."/>
            <person name="Razin E."/>
        </authorList>
    </citation>
    <scope>INTERACTION WITH MITF</scope>
    <scope>FUNCTION</scope>
</reference>
<reference key="12">
    <citation type="journal article" date="2003" name="J. Biol. Chem.">
        <title>The interaction between HIV-1 Gag and human lysyl-tRNA synthetase during viral assembly.</title>
        <authorList>
            <person name="Javanbakht H."/>
            <person name="Halwani R."/>
            <person name="Cen S."/>
            <person name="Saadatmand J."/>
            <person name="Musier-Forsyth K."/>
            <person name="Gottlinger H."/>
            <person name="Kleiman L."/>
        </authorList>
    </citation>
    <scope>SUBUNIT</scope>
    <scope>INTERACTION WITH HIV-1 GAG</scope>
</reference>
<reference key="13">
    <citation type="journal article" date="2004" name="J. Virol.">
        <title>Cellular distribution of Lysyl-tRNA synthetase and its interaction with Gag during human immunodeficiency virus type 1 assembly.</title>
        <authorList>
            <person name="Halwani R."/>
            <person name="Cen S."/>
            <person name="Javanbakht H."/>
            <person name="Saadatmand J."/>
            <person name="Kim S."/>
            <person name="Shiba K."/>
            <person name="Kleiman L."/>
        </authorList>
    </citation>
    <scope>SUBCELLULAR LOCATION</scope>
    <scope>MUTAGENESIS OF 1-MET--GLY-65</scope>
    <scope>INTERACTION WITH AIMP2 AND HIV-1 GAG</scope>
    <scope>DOMAIN</scope>
</reference>
<reference key="14">
    <citation type="journal article" date="2005" name="Proc. Natl. Acad. Sci. U.S.A.">
        <title>Human lysyl-tRNA synthetase is secreted to trigger proinflammatory response.</title>
        <authorList>
            <person name="Park S.G."/>
            <person name="Kim H.J."/>
            <person name="Min Y.H."/>
            <person name="Choi E.-C."/>
            <person name="Shin Y.K."/>
            <person name="Park B.-J."/>
            <person name="Lee S.W."/>
            <person name="Kim S."/>
        </authorList>
    </citation>
    <scope>SUBCELLULAR LOCATION</scope>
    <scope>FUNCTION</scope>
</reference>
<reference key="15">
    <citation type="journal article" date="2008" name="Biochem. Biophys. Res. Commun.">
        <title>Lysyl-tRNA synthetase interacts with EF1alpha, aspartyl-tRNA synthetase and p38 in vitro.</title>
        <authorList>
            <person name="Guzzo C.M."/>
            <person name="Yang D.C.H."/>
        </authorList>
    </citation>
    <scope>FUNCTION</scope>
    <scope>CATALYTIC ACTIVITY</scope>
    <scope>INTERACTION WITH EEF1A1; AIMP2 AND DARS</scope>
    <scope>DOMAIN</scope>
</reference>
<reference key="16">
    <citation type="journal article" date="2009" name="Anal. Chem.">
        <title>Lys-N and trypsin cover complementary parts of the phosphoproteome in a refined SCX-based approach.</title>
        <authorList>
            <person name="Gauci S."/>
            <person name="Helbig A.O."/>
            <person name="Slijper M."/>
            <person name="Krijgsveld J."/>
            <person name="Heck A.J."/>
            <person name="Mohammed S."/>
        </authorList>
    </citation>
    <scope>ACETYLATION [LARGE SCALE ANALYSIS] AT ALA-2</scope>
    <scope>CLEAVAGE OF INITIATOR METHIONINE [LARGE SCALE ANALYSIS]</scope>
    <scope>IDENTIFICATION BY MASS SPECTROMETRY [LARGE SCALE ANALYSIS]</scope>
</reference>
<reference key="17">
    <citation type="journal article" date="2009" name="J. Biol. Chem.">
        <title>Dissection of the structural organization of the aminoacyl-tRNA synthetase complex.</title>
        <authorList>
            <person name="Kaminska M."/>
            <person name="Havrylenko S."/>
            <person name="Decottignies P."/>
            <person name="Gillet S."/>
            <person name="Le Marechal P."/>
            <person name="Negrutskii B."/>
            <person name="Mirande M."/>
        </authorList>
    </citation>
    <scope>SUBUNIT</scope>
    <scope>IDENTIFICATION BY MASS SPECTROMETRY</scope>
</reference>
<reference key="18">
    <citation type="journal article" date="2009" name="J. Biol. Chem.">
        <title>Dynamic Organization of Aminoacyl-tRNA Synthetase Complexes in the Cytoplasm of Human Cells.</title>
        <authorList>
            <person name="Kaminska M."/>
            <person name="Havrylenko S."/>
            <person name="Decottignies P."/>
            <person name="Le Marechal P."/>
            <person name="Negrutskii B."/>
            <person name="Mirande M."/>
        </authorList>
    </citation>
    <scope>SUBCELLULAR LOCATION</scope>
    <scope>SUBUNIT</scope>
</reference>
<reference key="19">
    <citation type="journal article" date="2009" name="Mol. Cell">
        <title>LysRS serves as a key signaling molecule in the immune response by regulating gene expression.</title>
        <authorList>
            <person name="Yannay-Cohen N."/>
            <person name="Carmi-Levy I."/>
            <person name="Kay G."/>
            <person name="Yang C.M."/>
            <person name="Han J.M."/>
            <person name="Kemeny D.M."/>
            <person name="Kim S."/>
            <person name="Nechushtan H."/>
            <person name="Razin E."/>
        </authorList>
    </citation>
    <scope>FUNCTION</scope>
    <scope>CATALYTIC ACTIVITY</scope>
    <scope>PHOSPHORYLATION AT SER-207</scope>
    <scope>MUTAGENESIS OF SER-207</scope>
</reference>
<reference key="20">
    <citation type="journal article" date="2009" name="Science">
        <title>Lysine acetylation targets protein complexes and co-regulates major cellular functions.</title>
        <authorList>
            <person name="Choudhary C."/>
            <person name="Kumar C."/>
            <person name="Gnad F."/>
            <person name="Nielsen M.L."/>
            <person name="Rehman M."/>
            <person name="Walther T.C."/>
            <person name="Olsen J.V."/>
            <person name="Mann M."/>
        </authorList>
    </citation>
    <scope>ACETYLATION [LARGE SCALE ANALYSIS] AT LYS-88 AND LYS-141</scope>
    <scope>IDENTIFICATION BY MASS SPECTROMETRY [LARGE SCALE ANALYSIS]</scope>
</reference>
<reference key="21">
    <citation type="journal article" date="2011" name="BMC Syst. Biol.">
        <title>Initial characterization of the human central proteome.</title>
        <authorList>
            <person name="Burkard T.R."/>
            <person name="Planyavsky M."/>
            <person name="Kaupe I."/>
            <person name="Breitwieser F.P."/>
            <person name="Buerckstuemmer T."/>
            <person name="Bennett K.L."/>
            <person name="Superti-Furga G."/>
            <person name="Colinge J."/>
        </authorList>
    </citation>
    <scope>IDENTIFICATION BY MASS SPECTROMETRY [LARGE SCALE ANALYSIS]</scope>
</reference>
<reference key="22">
    <citation type="journal article" date="2012" name="Mol. Cell. Proteomics">
        <title>Comparative large-scale characterisation of plant vs. mammal proteins reveals similar and idiosyncratic N-alpha acetylation features.</title>
        <authorList>
            <person name="Bienvenut W.V."/>
            <person name="Sumpton D."/>
            <person name="Martinez A."/>
            <person name="Lilla S."/>
            <person name="Espagne C."/>
            <person name="Meinnel T."/>
            <person name="Giglione C."/>
        </authorList>
    </citation>
    <scope>ACETYLATION [LARGE SCALE ANALYSIS] AT ALA-2</scope>
    <scope>CLEAVAGE OF INITIATOR METHIONINE [LARGE SCALE ANALYSIS]</scope>
    <scope>IDENTIFICATION BY MASS SPECTROMETRY [LARGE SCALE ANALYSIS]</scope>
</reference>
<reference key="23">
    <citation type="journal article" date="2012" name="Proc. Natl. Acad. Sci. U.S.A.">
        <title>N-terminal acetylome analyses and functional insights of the N-terminal acetyltransferase NatB.</title>
        <authorList>
            <person name="Van Damme P."/>
            <person name="Lasa M."/>
            <person name="Polevoda B."/>
            <person name="Gazquez C."/>
            <person name="Elosegui-Artola A."/>
            <person name="Kim D.S."/>
            <person name="De Juan-Pardo E."/>
            <person name="Demeyer K."/>
            <person name="Hole K."/>
            <person name="Larrea E."/>
            <person name="Timmerman E."/>
            <person name="Prieto J."/>
            <person name="Arnesen T."/>
            <person name="Sherman F."/>
            <person name="Gevaert K."/>
            <person name="Aldabe R."/>
        </authorList>
    </citation>
    <scope>ACETYLATION [LARGE SCALE ANALYSIS] AT ALA-2</scope>
    <scope>CLEAVAGE OF INITIATOR METHIONINE [LARGE SCALE ANALYSIS]</scope>
    <scope>IDENTIFICATION BY MASS SPECTROMETRY [LARGE SCALE ANALYSIS]</scope>
</reference>
<reference key="24">
    <citation type="journal article" date="2013" name="PLoS ONE">
        <title>Reinvestigation of aminoacyl-tRNA synthetase core complex by affinity purification-mass spectrometry reveals TARSL2 as a potential member of the complex.</title>
        <authorList>
            <person name="Kim K."/>
            <person name="Park S.J."/>
            <person name="Na S."/>
            <person name="Kim J.S."/>
            <person name="Choi H."/>
            <person name="Kim Y.K."/>
            <person name="Paek E."/>
            <person name="Lee C."/>
        </authorList>
    </citation>
    <scope>IDENTIFICATION IN THE MSC COMPLEX</scope>
    <scope>INTERACTION WITH TARSL2</scope>
    <scope>IDENTIFICATION BY MASS SPECTROMETRY</scope>
</reference>
<reference key="25">
    <citation type="journal article" date="2015" name="Proteomics">
        <title>N-terminome analysis of the human mitochondrial proteome.</title>
        <authorList>
            <person name="Vaca Jacome A.S."/>
            <person name="Rabilloud T."/>
            <person name="Schaeffer-Reiss C."/>
            <person name="Rompais M."/>
            <person name="Ayoub D."/>
            <person name="Lane L."/>
            <person name="Bairoch A."/>
            <person name="Van Dorsselaer A."/>
            <person name="Carapito C."/>
        </authorList>
    </citation>
    <scope>IDENTIFICATION BY MASS SPECTROMETRY [LARGE SCALE ANALYSIS]</scope>
</reference>
<reference key="26">
    <citation type="journal article" date="2008" name="Proc. Natl. Acad. Sci. U.S.A.">
        <title>Crystal structure of tetrameric form of human lysyl-tRNA synthetase: Implications for multisynthetase complex formation.</title>
        <authorList>
            <person name="Guo M."/>
            <person name="Ignatov M."/>
            <person name="Musier-Forsyth K."/>
            <person name="Schimmel P."/>
            <person name="Yang X.-L."/>
        </authorList>
    </citation>
    <scope>X-RAY CRYSTALLOGRAPHY (2.31 ANGSTROMS) OF 70-581 IN COMPLEX WITH AIMP2; LYSINE AND ATP</scope>
    <scope>SUBUNIT</scope>
</reference>
<reference evidence="36" key="27">
    <citation type="journal article" date="2013" name="Mol. Cell">
        <title>Structural switch of lysyl-tRNA synthetase between translation and transcription.</title>
        <authorList>
            <person name="Ofir-Birin Y."/>
            <person name="Fang P."/>
            <person name="Bennett S.P."/>
            <person name="Zhang H.M."/>
            <person name="Wang J."/>
            <person name="Rachmin I."/>
            <person name="Shapiro R."/>
            <person name="Song J."/>
            <person name="Dagan A."/>
            <person name="Pozo J."/>
            <person name="Kim S."/>
            <person name="Marshall A.G."/>
            <person name="Schimmel P."/>
            <person name="Yang X.L."/>
            <person name="Nechushtan H."/>
            <person name="Razin E."/>
            <person name="Guo M."/>
        </authorList>
    </citation>
    <scope>X-RAY CRYSTALLOGRAPHY (2.84 ANGSTROMS) OF 70-581 IN COMPLEX WITH AIMP2; LYSINE AND ATP ANALOG</scope>
    <scope>FUNCTION</scope>
    <scope>CATALYTIC ACTIVITY</scope>
    <scope>SUBUNIT</scope>
    <scope>INTERACTION WITH MITF</scope>
    <scope>SUBCELLULAR LOCATION</scope>
    <scope>MUTAGENESIS OF VAL-101; SER-207 AND GLY-540</scope>
</reference>
<reference evidence="37 38" key="28">
    <citation type="journal article" date="2015" name="Chem. Biol.">
        <title>Structural Basis for Specific Inhibition of tRNA Synthetase by an ATP Competitive Inhibitor.</title>
        <authorList>
            <person name="Fang P."/>
            <person name="Han H."/>
            <person name="Wang J."/>
            <person name="Chen K."/>
            <person name="Chen X."/>
            <person name="Guo M."/>
        </authorList>
    </citation>
    <scope>X-RAY CRYSTALLOGRAPHY (2.10 ANGSTROMS) OF 70-581 IN COMPLEXES WITH AIMP2; LYSINE AND THE INHIBITOR CLADOSPORIN</scope>
</reference>
<reference key="29">
    <citation type="journal article" date="2010" name="Am. J. Hum. Genet.">
        <title>Compound heterozygosity for loss-of-function lysyl-tRNA synthetase mutations in a patient with peripheral neuropathy.</title>
        <authorList>
            <person name="McLaughlin H.M."/>
            <person name="Sakaguchi R."/>
            <person name="Liu C."/>
            <person name="Igarashi T."/>
            <person name="Pehlivan D."/>
            <person name="Chu K."/>
            <person name="Iyer R."/>
            <person name="Cruz P."/>
            <person name="Cherukuri P.F."/>
            <person name="Hansen N.F."/>
            <person name="Mullikin J.C."/>
            <person name="Biesecker L.G."/>
            <person name="Wilson T.E."/>
            <person name="Ionasescu V."/>
            <person name="Nicholson G."/>
            <person name="Searby C."/>
            <person name="Talbot K."/>
            <person name="Vance J.M."/>
            <person name="Zuchner S."/>
            <person name="Szigeti K."/>
            <person name="Lupski J.R."/>
            <person name="Hou Y.M."/>
            <person name="Green E.D."/>
            <person name="Antonellis A."/>
        </authorList>
    </citation>
    <scope>VARIANTS CMTRIB HIS-105 AND MET-274</scope>
    <scope>VARIANT SER-595</scope>
</reference>
<reference key="30">
    <citation type="journal article" date="2013" name="Am. J. Hum. Genet.">
        <title>Mutations in KARS, encoding lysyl-tRNA synthetase, cause autosomal-recessive nonsyndromic hearing impairment DFNB89.</title>
        <authorList>
            <consortium name="University of Washington Center for Mendelian Genomics"/>
            <person name="Santos-Cortez R.L."/>
            <person name="Lee K."/>
            <person name="Azeem Z."/>
            <person name="Antonellis P.J."/>
            <person name="Pollock L.M."/>
            <person name="Khan S."/>
            <person name="Ullah I."/>
            <person name="Andrade-Elizondo P.B."/>
            <person name="Chiu I."/>
            <person name="Adams M.D."/>
            <person name="Basit S."/>
            <person name="Smith J.D."/>
            <person name="Nickerson D.A."/>
            <person name="McDermott B.M. Jr."/>
            <person name="Ahmad W."/>
            <person name="Leal S.M."/>
        </authorList>
    </citation>
    <scope>VARIANTS DFNB89 HIS-145 AND ASN-349</scope>
</reference>
<reference key="31">
    <citation type="journal article" date="2015" name="J. Child Neurol.">
        <title>Congenital Visual Impairment and Progressive Microcephaly Due to Lysyl-Transfer Ribonucleic Acid (RNA) Synthetase (KARS) Mutations: The Expanding Phenotype of Aminoacyl-Transfer RNA Synthetase Mutations in Human Disease.</title>
        <authorList>
            <consortium name="FORGE Canada Consortium"/>
            <person name="McMillan H.J."/>
            <person name="Humphreys P."/>
            <person name="Smith A."/>
            <person name="Schwartzentruber J."/>
            <person name="Chakraborty P."/>
            <person name="Bulman D.E."/>
            <person name="Beaulieu C.L."/>
            <person name="Majewski J."/>
            <person name="Boycott K.M."/>
            <person name="Geraghty M.T."/>
        </authorList>
    </citation>
    <scope>INVOLVEMENT IN LEPID</scope>
    <scope>VARIANTS LEPID TRP-438 AND LYS-525</scope>
</reference>
<reference key="32">
    <citation type="journal article" date="2017" name="Clin. Genet.">
        <title>Novel mutations in KARS cause hypertrophic cardiomyopathy and combined mitochondrial respiratory chain defect.</title>
        <authorList>
            <person name="Verrigni D."/>
            <person name="Diodato D."/>
            <person name="Di Nottia M."/>
            <person name="Torraco A."/>
            <person name="Bellacchio E."/>
            <person name="Rizza T."/>
            <person name="Tozzi G."/>
            <person name="Verardo M."/>
            <person name="Piemonte F."/>
            <person name="Tasca G."/>
            <person name="D'Amico A."/>
            <person name="Bertini E."/>
            <person name="Carrozzo R."/>
        </authorList>
    </citation>
    <scope>VARIANTS HIS-350 AND ARG-390</scope>
</reference>
<reference key="33">
    <citation type="journal article" date="2017" name="Hum. Mutat.">
        <title>Mutations in KARS cause early-onset hearing loss and leukoencephalopathy: Potential pathogenic mechanism.</title>
        <authorList>
            <person name="Zhou X.L."/>
            <person name="He L.X."/>
            <person name="Yu L.J."/>
            <person name="Wang Y."/>
            <person name="Wang X.J."/>
            <person name="Wang E.D."/>
            <person name="Yang T."/>
        </authorList>
    </citation>
    <scope>INVOLVEMENT IN DEAPLE</scope>
    <scope>VARIANTS DEAPLE HIS-477 AND SER-505</scope>
    <scope>CHARACTERIZATION OF VARIANTS DEAPLE HIS-477 AND SER-505</scope>
    <scope>MUTAGENESIS OF ASP-346</scope>
    <scope>SUBCELLULAR LOCATION</scope>
    <scope>FUNCTION</scope>
    <scope>COMPONENT OF A SUBUNIT COMPLEX</scope>
    <scope>SUBUNIT</scope>
    <scope>BIOPHYSICOCHEMICAL PROPERTIES</scope>
</reference>
<reference key="34">
    <citation type="journal article" date="2018" name="Hum. Mutat.">
        <title>Inhibition of mitochondrial translation in fibroblasts from a patient expressing the KARS p.(Pro228Leu) variant and presenting with sensorineural deafness, developmental delay, and lactic acidosis.</title>
        <authorList>
            <person name="Ruzzenente B."/>
            <person name="Assouline Z."/>
            <person name="Barcia G."/>
            <person name="Rio M."/>
            <person name="Boddaert N."/>
            <person name="Munnich A."/>
            <person name="Roetig A."/>
            <person name="Metodiev M.D."/>
        </authorList>
    </citation>
    <scope>INVOLVEMENT IN LEPID</scope>
    <scope>VARIANT LEPID LEU-200</scope>
</reference>
<reference key="35">
    <citation type="journal article" date="2018" name="Orphanet J. Rare Dis.">
        <title>KARS-related diseases: progressive leukoencephalopathy with brainstem and spinal cord calcifications as new phenotype and a review of literature.</title>
        <authorList>
            <person name="Ardissone A."/>
            <person name="Tonduti D."/>
            <person name="Legati A."/>
            <person name="Lamantea E."/>
            <person name="Barone R."/>
            <person name="Dorboz I."/>
            <person name="Boespflug-Tanguy O."/>
            <person name="Nebbia G."/>
            <person name="Maggioni M."/>
            <person name="Garavaglia B."/>
            <person name="Moroni I."/>
            <person name="Farina L."/>
            <person name="Pichiecchio A."/>
            <person name="Orcesi S."/>
            <person name="Chiapparini L."/>
            <person name="Ghezzi D."/>
        </authorList>
    </citation>
    <scope>INVOLVEMENT IN LEPID</scope>
    <scope>VARIANT LEPID HIS-477</scope>
</reference>
<reference key="36">
    <citation type="journal article" date="2019" name="Brain">
        <title>Biallelic KARS pathogenic variants cause an early-onset progressive leukodystrophy.</title>
        <authorList>
            <person name="Itoh M."/>
            <person name="Dai H."/>
            <person name="Horike S.I."/>
            <person name="Gonzalez J."/>
            <person name="Kitami Y."/>
            <person name="Meguro-Horike M."/>
            <person name="Kuki I."/>
            <person name="Shimakawa S."/>
            <person name="Yoshinaga H."/>
            <person name="Ota Y."/>
            <person name="Okazaki T."/>
            <person name="Maegaki Y."/>
            <person name="Nabatame S."/>
            <person name="Okazaki S."/>
            <person name="Kawawaki H."/>
            <person name="Ueno N."/>
            <person name="Goto Y.I."/>
            <person name="Kato Y."/>
        </authorList>
    </citation>
    <scope>INVOLVEMENT IN LEPID</scope>
    <scope>VARIANTS LEPID ASP-189 AND PHE-568</scope>
    <scope>CHARACTERIZATION OF VARIANT LEPID VARIANTS LEPID ASP-189 AND PHE-568</scope>
</reference>
<reference key="37">
    <citation type="journal article" date="2019" name="Hum. Mutat.">
        <title>Mutations in KARS cause a severe neurological and neurosensory disease with optic neuropathy.</title>
        <authorList>
            <person name="Scheidecker S."/>
            <person name="Baer S."/>
            <person name="Stoetzel C."/>
            <person name="Geoffroy V."/>
            <person name="Lannes B."/>
            <person name="Rinaldi B."/>
            <person name="Fischer F."/>
            <person name="Becker H.D."/>
            <person name="Pelletier V."/>
            <person name="Pagan C."/>
            <person name="Acquaviva-Bourdain C."/>
            <person name="Kremer S."/>
            <person name="Mirande M."/>
            <person name="Tranchant C."/>
            <person name="Muller J."/>
            <person name="Friant S."/>
            <person name="Dollfus H."/>
        </authorList>
    </citation>
    <scope>INVOLVEMENT IN DEAPLE</scope>
    <scope>VARIANTS DEAPLE LEU-200 AND VAL-263</scope>
    <scope>CHARACTERIZATION OF VARIANTS DEAPLE LEU-200 AND VAL-263</scope>
    <scope>INTERACTION WITH AIMP2</scope>
</reference>
<reference key="38">
    <citation type="journal article" date="2019" name="Neurology">
        <title>Biallelic variants in LARS2 and KARS cause deafness and (ovario)leukodystrophy.</title>
        <authorList>
            <person name="van der Knaap M.S."/>
            <person name="Bugiani M."/>
            <person name="Mendes M.I."/>
            <person name="Riley L.G."/>
            <person name="Smith D.E.C."/>
            <person name="Rudinger-Thirion J."/>
            <person name="Frugier M."/>
            <person name="Breur M."/>
            <person name="Crawford J."/>
            <person name="van Gaalen J."/>
            <person name="Schouten M."/>
            <person name="Willems M."/>
            <person name="Waisfisz Q."/>
            <person name="Mau-Them F.T."/>
            <person name="Rodenburg R.J."/>
            <person name="Taft R.J."/>
            <person name="Keren B."/>
            <person name="Christodoulou J."/>
            <person name="Depienne C."/>
            <person name="Simons C."/>
            <person name="Salomons G.S."/>
            <person name="Mochel F."/>
        </authorList>
    </citation>
    <scope>INVOLVEMENT IN DEAPLE</scope>
    <scope>VARIANTS DEAPLE HIS-80 AND PHE-448</scope>
</reference>
<dbReference type="EC" id="2.7.7.-" evidence="13 15 27"/>
<dbReference type="EC" id="6.1.1.6" evidence="9 15 29"/>
<dbReference type="EMBL" id="D32053">
    <property type="protein sequence ID" value="BAA22084.1"/>
    <property type="molecule type" value="mRNA"/>
</dbReference>
<dbReference type="EMBL" id="AF285758">
    <property type="protein sequence ID" value="AAG30114.1"/>
    <property type="molecule type" value="mRNA"/>
</dbReference>
<dbReference type="EMBL" id="D31890">
    <property type="protein sequence ID" value="BAA06688.1"/>
    <property type="status" value="ALT_INIT"/>
    <property type="molecule type" value="mRNA"/>
</dbReference>
<dbReference type="EMBL" id="AC025287">
    <property type="status" value="NOT_ANNOTATED_CDS"/>
    <property type="molecule type" value="Genomic_DNA"/>
</dbReference>
<dbReference type="EMBL" id="CH471114">
    <property type="protein sequence ID" value="EAW95622.1"/>
    <property type="molecule type" value="Genomic_DNA"/>
</dbReference>
<dbReference type="EMBL" id="CH471114">
    <property type="protein sequence ID" value="EAW95624.1"/>
    <property type="molecule type" value="Genomic_DNA"/>
</dbReference>
<dbReference type="EMBL" id="BC004132">
    <property type="protein sequence ID" value="AAH04132.1"/>
    <property type="molecule type" value="mRNA"/>
</dbReference>
<dbReference type="CCDS" id="CCDS10923.1">
    <molecule id="Q15046-1"/>
</dbReference>
<dbReference type="CCDS" id="CCDS45532.1">
    <molecule id="Q15046-2"/>
</dbReference>
<dbReference type="RefSeq" id="NP_001123561.1">
    <molecule id="Q15046-2"/>
    <property type="nucleotide sequence ID" value="NM_001130089.2"/>
</dbReference>
<dbReference type="RefSeq" id="NP_005539.1">
    <molecule id="Q15046-1"/>
    <property type="nucleotide sequence ID" value="NM_005548.3"/>
</dbReference>
<dbReference type="PDB" id="3BJU">
    <property type="method" value="X-ray"/>
    <property type="resolution" value="2.31 A"/>
    <property type="chains" value="A/B/C/D=70-582"/>
</dbReference>
<dbReference type="PDB" id="4DPG">
    <property type="method" value="X-ray"/>
    <property type="resolution" value="2.84 A"/>
    <property type="chains" value="A/B/C/D/E/F/G/H=70-581"/>
</dbReference>
<dbReference type="PDB" id="4YCU">
    <property type="method" value="X-ray"/>
    <property type="resolution" value="2.10 A"/>
    <property type="chains" value="A/B=70-581"/>
</dbReference>
<dbReference type="PDB" id="4YCW">
    <property type="method" value="X-ray"/>
    <property type="resolution" value="2.90 A"/>
    <property type="chains" value="A/B/E/F=70-581"/>
</dbReference>
<dbReference type="PDB" id="6CHD">
    <property type="method" value="X-ray"/>
    <property type="resolution" value="2.50 A"/>
    <property type="chains" value="A/B=1-597"/>
</dbReference>
<dbReference type="PDB" id="6ILD">
    <property type="method" value="X-ray"/>
    <property type="resolution" value="1.88 A"/>
    <property type="chains" value="A/B=70-581"/>
</dbReference>
<dbReference type="PDB" id="6ILH">
    <property type="method" value="X-ray"/>
    <property type="resolution" value="2.50 A"/>
    <property type="chains" value="A/B=70-581"/>
</dbReference>
<dbReference type="PDB" id="7EA9">
    <property type="method" value="X-ray"/>
    <property type="resolution" value="2.50 A"/>
    <property type="chains" value="A/B/C/D=70-581"/>
</dbReference>
<dbReference type="PDB" id="8HYR">
    <property type="method" value="X-ray"/>
    <property type="resolution" value="2.55 A"/>
    <property type="chains" value="A/B=70-580"/>
</dbReference>
<dbReference type="PDB" id="8XP4">
    <property type="method" value="X-ray"/>
    <property type="resolution" value="2.26 A"/>
    <property type="chains" value="A/B=70-580"/>
</dbReference>
<dbReference type="PDB" id="9DOW">
    <property type="method" value="EM"/>
    <property type="resolution" value="3.10 A"/>
    <property type="chains" value="A/B=1-597"/>
</dbReference>
<dbReference type="PDB" id="9DPA">
    <property type="method" value="EM"/>
    <property type="resolution" value="3.00 A"/>
    <property type="chains" value="A/B=1-597"/>
</dbReference>
<dbReference type="PDB" id="9DPB">
    <property type="method" value="EM"/>
    <property type="resolution" value="2.90 A"/>
    <property type="chains" value="A/B=1-597"/>
</dbReference>
<dbReference type="PDB" id="9DPL">
    <property type="method" value="EM"/>
    <property type="resolution" value="2.80 A"/>
    <property type="chains" value="A/B=1-597"/>
</dbReference>
<dbReference type="PDBsum" id="3BJU"/>
<dbReference type="PDBsum" id="4DPG"/>
<dbReference type="PDBsum" id="4YCU"/>
<dbReference type="PDBsum" id="4YCW"/>
<dbReference type="PDBsum" id="6CHD"/>
<dbReference type="PDBsum" id="6ILD"/>
<dbReference type="PDBsum" id="6ILH"/>
<dbReference type="PDBsum" id="7EA9"/>
<dbReference type="PDBsum" id="8HYR"/>
<dbReference type="PDBsum" id="8XP4"/>
<dbReference type="PDBsum" id="9DOW"/>
<dbReference type="PDBsum" id="9DPA"/>
<dbReference type="PDBsum" id="9DPB"/>
<dbReference type="PDBsum" id="9DPL"/>
<dbReference type="BMRB" id="Q15046"/>
<dbReference type="EMDB" id="EMD-47094"/>
<dbReference type="EMDB" id="EMD-47100"/>
<dbReference type="EMDB" id="EMD-47101"/>
<dbReference type="EMDB" id="EMD-47106"/>
<dbReference type="SMR" id="Q15046"/>
<dbReference type="BioGRID" id="109938">
    <property type="interactions" value="392"/>
</dbReference>
<dbReference type="ComplexPortal" id="CPX-2469">
    <property type="entry name" value="Multiaminoacyl-tRNA synthetase complex"/>
</dbReference>
<dbReference type="CORUM" id="Q15046"/>
<dbReference type="DIP" id="DIP-29725N"/>
<dbReference type="FunCoup" id="Q15046">
    <property type="interactions" value="3187"/>
</dbReference>
<dbReference type="IntAct" id="Q15046">
    <property type="interactions" value="104"/>
</dbReference>
<dbReference type="MINT" id="Q15046"/>
<dbReference type="STRING" id="9606.ENSP00000325448"/>
<dbReference type="BindingDB" id="Q15046"/>
<dbReference type="ChEMBL" id="CHEMBL5575"/>
<dbReference type="DrugBank" id="DB00123">
    <property type="generic name" value="Lysine"/>
</dbReference>
<dbReference type="DrugCentral" id="Q15046"/>
<dbReference type="MoonProt" id="Q15046"/>
<dbReference type="CarbonylDB" id="Q15046"/>
<dbReference type="GlyCosmos" id="Q15046">
    <property type="glycosylation" value="2 sites, 1 glycan"/>
</dbReference>
<dbReference type="GlyGen" id="Q15046">
    <property type="glycosylation" value="2 sites, 1 O-linked glycan (2 sites)"/>
</dbReference>
<dbReference type="iPTMnet" id="Q15046"/>
<dbReference type="MetOSite" id="Q15046"/>
<dbReference type="PhosphoSitePlus" id="Q15046"/>
<dbReference type="SwissPalm" id="Q15046"/>
<dbReference type="BioMuta" id="KARS"/>
<dbReference type="DMDM" id="20178333"/>
<dbReference type="CPTAC" id="CPTAC-231"/>
<dbReference type="jPOST" id="Q15046"/>
<dbReference type="MassIVE" id="Q15046"/>
<dbReference type="PaxDb" id="9606-ENSP00000325448"/>
<dbReference type="PeptideAtlas" id="Q15046"/>
<dbReference type="ProteomicsDB" id="60395">
    <molecule id="Q15046-1"/>
</dbReference>
<dbReference type="ProteomicsDB" id="60396">
    <molecule id="Q15046-2"/>
</dbReference>
<dbReference type="Pumba" id="Q15046"/>
<dbReference type="ABCD" id="Q15046">
    <property type="antibodies" value="3 sequenced antibodies"/>
</dbReference>
<dbReference type="Antibodypedia" id="16841">
    <property type="antibodies" value="247 antibodies from 36 providers"/>
</dbReference>
<dbReference type="DNASU" id="3735"/>
<dbReference type="Ensembl" id="ENST00000302445.8">
    <molecule id="Q15046-1"/>
    <property type="protein sequence ID" value="ENSP00000303043.3"/>
    <property type="gene ID" value="ENSG00000065427.15"/>
</dbReference>
<dbReference type="Ensembl" id="ENST00000319410.9">
    <molecule id="Q15046-2"/>
    <property type="protein sequence ID" value="ENSP00000325448.5"/>
    <property type="gene ID" value="ENSG00000065427.15"/>
</dbReference>
<dbReference type="GeneID" id="3735"/>
<dbReference type="KEGG" id="hsa:3735"/>
<dbReference type="MANE-Select" id="ENST00000302445.8">
    <property type="protein sequence ID" value="ENSP00000303043.3"/>
    <property type="RefSeq nucleotide sequence ID" value="NM_005548.3"/>
    <property type="RefSeq protein sequence ID" value="NP_005539.1"/>
</dbReference>
<dbReference type="UCSC" id="uc002feq.4">
    <molecule id="Q15046-1"/>
    <property type="organism name" value="human"/>
</dbReference>
<dbReference type="AGR" id="HGNC:6215"/>
<dbReference type="CTD" id="3735"/>
<dbReference type="DisGeNET" id="3735"/>
<dbReference type="GeneCards" id="KARS1"/>
<dbReference type="HGNC" id="HGNC:6215">
    <property type="gene designation" value="KARS1"/>
</dbReference>
<dbReference type="HPA" id="ENSG00000065427">
    <property type="expression patterns" value="Low tissue specificity"/>
</dbReference>
<dbReference type="MalaCards" id="KARS1"/>
<dbReference type="MIM" id="601421">
    <property type="type" value="gene"/>
</dbReference>
<dbReference type="MIM" id="613641">
    <property type="type" value="phenotype"/>
</dbReference>
<dbReference type="MIM" id="613916">
    <property type="type" value="phenotype"/>
</dbReference>
<dbReference type="MIM" id="619147">
    <property type="type" value="phenotype"/>
</dbReference>
<dbReference type="MIM" id="619196">
    <property type="type" value="phenotype"/>
</dbReference>
<dbReference type="neXtProt" id="NX_Q15046"/>
<dbReference type="OpenTargets" id="ENSG00000065427"/>
<dbReference type="Orphanet" id="652532">
    <property type="disease" value="Adult-onset progressive leukoencephalopathy-early-onset deafness"/>
</dbReference>
<dbReference type="Orphanet" id="254334">
    <property type="disease" value="Autosomal recessive intermediate Charcot-Marie-Tooth disease type B"/>
</dbReference>
<dbReference type="Orphanet" id="3240">
    <property type="disease" value="Early-onset progressive leukoencephalopathy-central nervous system calcification-deafness-visual impairment syndrome"/>
</dbReference>
<dbReference type="Orphanet" id="90636">
    <property type="disease" value="Rare autosomal recessive non-syndromic sensorineural deafness type DFNB"/>
</dbReference>
<dbReference type="PharmGKB" id="PA30016"/>
<dbReference type="VEuPathDB" id="HostDB:ENSG00000065427"/>
<dbReference type="eggNOG" id="KOG1885">
    <property type="taxonomic scope" value="Eukaryota"/>
</dbReference>
<dbReference type="GeneTree" id="ENSGT01030000234618"/>
<dbReference type="HOGENOM" id="CLU_008255_6_0_1"/>
<dbReference type="InParanoid" id="Q15046"/>
<dbReference type="OMA" id="DFRNEGM"/>
<dbReference type="OrthoDB" id="21243at2759"/>
<dbReference type="PAN-GO" id="Q15046">
    <property type="GO annotations" value="12 GO annotations based on evolutionary models"/>
</dbReference>
<dbReference type="PhylomeDB" id="Q15046"/>
<dbReference type="TreeFam" id="TF300365"/>
<dbReference type="BRENDA" id="6.1.1.6">
    <property type="organism ID" value="2681"/>
</dbReference>
<dbReference type="PathwayCommons" id="Q15046"/>
<dbReference type="Reactome" id="R-HSA-2408522">
    <property type="pathway name" value="Selenoamino acid metabolism"/>
</dbReference>
<dbReference type="Reactome" id="R-HSA-379716">
    <property type="pathway name" value="Cytosolic tRNA aminoacylation"/>
</dbReference>
<dbReference type="Reactome" id="R-HSA-379726">
    <property type="pathway name" value="Mitochondrial tRNA aminoacylation"/>
</dbReference>
<dbReference type="Reactome" id="R-HSA-9856649">
    <property type="pathway name" value="Transcriptional and post-translational regulation of MITF-M expression and activity"/>
</dbReference>
<dbReference type="SABIO-RK" id="Q15046"/>
<dbReference type="SignaLink" id="Q15046"/>
<dbReference type="SIGNOR" id="Q15046"/>
<dbReference type="BioGRID-ORCS" id="3735">
    <property type="hits" value="824 hits in 1167 CRISPR screens"/>
</dbReference>
<dbReference type="CD-CODE" id="91857CE7">
    <property type="entry name" value="Nucleolus"/>
</dbReference>
<dbReference type="CD-CODE" id="FB4E32DD">
    <property type="entry name" value="Presynaptic clusters and postsynaptic densities"/>
</dbReference>
<dbReference type="ChiTaRS" id="KARS">
    <property type="organism name" value="human"/>
</dbReference>
<dbReference type="EvolutionaryTrace" id="Q15046"/>
<dbReference type="GeneWiki" id="KARS_(gene)"/>
<dbReference type="GenomeRNAi" id="3735"/>
<dbReference type="Pharos" id="Q15046">
    <property type="development level" value="Tchem"/>
</dbReference>
<dbReference type="PRO" id="PR:Q15046"/>
<dbReference type="Proteomes" id="UP000005640">
    <property type="component" value="Chromosome 16"/>
</dbReference>
<dbReference type="RNAct" id="Q15046">
    <property type="molecule type" value="protein"/>
</dbReference>
<dbReference type="Bgee" id="ENSG00000065427">
    <property type="expression patterns" value="Expressed in gingival epithelium and 215 other cell types or tissues"/>
</dbReference>
<dbReference type="ExpressionAtlas" id="Q15046">
    <property type="expression patterns" value="baseline and differential"/>
</dbReference>
<dbReference type="GO" id="GO:0017101">
    <property type="term" value="C:aminoacyl-tRNA synthetase multienzyme complex"/>
    <property type="evidence" value="ECO:0000314"/>
    <property type="project" value="UniProtKB"/>
</dbReference>
<dbReference type="GO" id="GO:0005737">
    <property type="term" value="C:cytoplasm"/>
    <property type="evidence" value="ECO:0000318"/>
    <property type="project" value="GO_Central"/>
</dbReference>
<dbReference type="GO" id="GO:0005829">
    <property type="term" value="C:cytosol"/>
    <property type="evidence" value="ECO:0000314"/>
    <property type="project" value="HPA"/>
</dbReference>
<dbReference type="GO" id="GO:0005615">
    <property type="term" value="C:extracellular space"/>
    <property type="evidence" value="ECO:0000314"/>
    <property type="project" value="CAFA"/>
</dbReference>
<dbReference type="GO" id="GO:0005759">
    <property type="term" value="C:mitochondrial matrix"/>
    <property type="evidence" value="ECO:0000304"/>
    <property type="project" value="Reactome"/>
</dbReference>
<dbReference type="GO" id="GO:0005739">
    <property type="term" value="C:mitochondrion"/>
    <property type="evidence" value="ECO:0000314"/>
    <property type="project" value="UniProtKB"/>
</dbReference>
<dbReference type="GO" id="GO:0005654">
    <property type="term" value="C:nucleoplasm"/>
    <property type="evidence" value="ECO:0000304"/>
    <property type="project" value="Reactome"/>
</dbReference>
<dbReference type="GO" id="GO:0005634">
    <property type="term" value="C:nucleus"/>
    <property type="evidence" value="ECO:0000314"/>
    <property type="project" value="UniProtKB"/>
</dbReference>
<dbReference type="GO" id="GO:0005886">
    <property type="term" value="C:plasma membrane"/>
    <property type="evidence" value="ECO:0000314"/>
    <property type="project" value="HPA"/>
</dbReference>
<dbReference type="GO" id="GO:0016597">
    <property type="term" value="F:amino acid binding"/>
    <property type="evidence" value="ECO:0007669"/>
    <property type="project" value="Ensembl"/>
</dbReference>
<dbReference type="GO" id="GO:0005524">
    <property type="term" value="F:ATP binding"/>
    <property type="evidence" value="ECO:0007669"/>
    <property type="project" value="UniProtKB-KW"/>
</dbReference>
<dbReference type="GO" id="GO:0003877">
    <property type="term" value="F:ATP:ADP adenylyltransferase activity"/>
    <property type="evidence" value="ECO:0000314"/>
    <property type="project" value="UniProtKB"/>
</dbReference>
<dbReference type="GO" id="GO:0042802">
    <property type="term" value="F:identical protein binding"/>
    <property type="evidence" value="ECO:0000353"/>
    <property type="project" value="IntAct"/>
</dbReference>
<dbReference type="GO" id="GO:0004824">
    <property type="term" value="F:lysine-tRNA ligase activity"/>
    <property type="evidence" value="ECO:0000314"/>
    <property type="project" value="UniProtKB"/>
</dbReference>
<dbReference type="GO" id="GO:0042803">
    <property type="term" value="F:protein homodimerization activity"/>
    <property type="evidence" value="ECO:0000353"/>
    <property type="project" value="UniProtKB"/>
</dbReference>
<dbReference type="GO" id="GO:0000049">
    <property type="term" value="F:tRNA binding"/>
    <property type="evidence" value="ECO:0000318"/>
    <property type="project" value="GO_Central"/>
</dbReference>
<dbReference type="GO" id="GO:0002276">
    <property type="term" value="P:basophil activation involved in immune response"/>
    <property type="evidence" value="ECO:0000316"/>
    <property type="project" value="CAFA"/>
</dbReference>
<dbReference type="GO" id="GO:0015966">
    <property type="term" value="P:diadenosine tetraphosphate biosynthetic process"/>
    <property type="evidence" value="ECO:0000314"/>
    <property type="project" value="UniProtKB"/>
</dbReference>
<dbReference type="GO" id="GO:0070371">
    <property type="term" value="P:ERK1 and ERK2 cascade"/>
    <property type="evidence" value="ECO:0000316"/>
    <property type="project" value="CAFA"/>
</dbReference>
<dbReference type="GO" id="GO:0006430">
    <property type="term" value="P:lysyl-tRNA aminoacylation"/>
    <property type="evidence" value="ECO:0000314"/>
    <property type="project" value="UniProtKB"/>
</dbReference>
<dbReference type="GO" id="GO:0045893">
    <property type="term" value="P:positive regulation of DNA-templated transcription"/>
    <property type="evidence" value="ECO:0000316"/>
    <property type="project" value="CAFA"/>
</dbReference>
<dbReference type="GO" id="GO:0002863">
    <property type="term" value="P:positive regulation of inflammatory response to antigenic stimulus"/>
    <property type="evidence" value="ECO:0000314"/>
    <property type="project" value="CAFA"/>
</dbReference>
<dbReference type="GO" id="GO:0043032">
    <property type="term" value="P:positive regulation of macrophage activation"/>
    <property type="evidence" value="ECO:0000314"/>
    <property type="project" value="CAFA"/>
</dbReference>
<dbReference type="GO" id="GO:0010165">
    <property type="term" value="P:response to X-ray"/>
    <property type="evidence" value="ECO:0007669"/>
    <property type="project" value="Ensembl"/>
</dbReference>
<dbReference type="GO" id="GO:0008033">
    <property type="term" value="P:tRNA processing"/>
    <property type="evidence" value="ECO:0000303"/>
    <property type="project" value="UniProtKB"/>
</dbReference>
<dbReference type="CDD" id="cd00775">
    <property type="entry name" value="LysRS_core"/>
    <property type="match status" value="1"/>
</dbReference>
<dbReference type="CDD" id="cd04322">
    <property type="entry name" value="LysRS_N"/>
    <property type="match status" value="1"/>
</dbReference>
<dbReference type="DisProt" id="DP02382"/>
<dbReference type="FunFam" id="2.40.50.140:FF:000050">
    <property type="entry name" value="Lysine--tRNA ligase"/>
    <property type="match status" value="1"/>
</dbReference>
<dbReference type="FunFam" id="3.30.930.10:FF:000029">
    <property type="entry name" value="Lysine--tRNA ligase"/>
    <property type="match status" value="1"/>
</dbReference>
<dbReference type="Gene3D" id="3.30.930.10">
    <property type="entry name" value="Bira Bifunctional Protein, Domain 2"/>
    <property type="match status" value="1"/>
</dbReference>
<dbReference type="Gene3D" id="2.40.50.140">
    <property type="entry name" value="Nucleic acid-binding proteins"/>
    <property type="match status" value="1"/>
</dbReference>
<dbReference type="HAMAP" id="MF_00252">
    <property type="entry name" value="Lys_tRNA_synth_class2"/>
    <property type="match status" value="1"/>
</dbReference>
<dbReference type="InterPro" id="IPR004364">
    <property type="entry name" value="Aa-tRNA-synt_II"/>
</dbReference>
<dbReference type="InterPro" id="IPR006195">
    <property type="entry name" value="aa-tRNA-synth_II"/>
</dbReference>
<dbReference type="InterPro" id="IPR045864">
    <property type="entry name" value="aa-tRNA-synth_II/BPL/LPL"/>
</dbReference>
<dbReference type="InterPro" id="IPR002313">
    <property type="entry name" value="Lys-tRNA-ligase_II"/>
</dbReference>
<dbReference type="InterPro" id="IPR034762">
    <property type="entry name" value="Lys-tRNA-ligase_II_bac/euk"/>
</dbReference>
<dbReference type="InterPro" id="IPR044136">
    <property type="entry name" value="Lys-tRNA-ligase_II_N"/>
</dbReference>
<dbReference type="InterPro" id="IPR018149">
    <property type="entry name" value="Lys-tRNA-synth_II_C"/>
</dbReference>
<dbReference type="InterPro" id="IPR012340">
    <property type="entry name" value="NA-bd_OB-fold"/>
</dbReference>
<dbReference type="InterPro" id="IPR004365">
    <property type="entry name" value="NA-bd_OB_tRNA"/>
</dbReference>
<dbReference type="NCBIfam" id="TIGR00499">
    <property type="entry name" value="lysS_bact"/>
    <property type="match status" value="1"/>
</dbReference>
<dbReference type="NCBIfam" id="NF001756">
    <property type="entry name" value="PRK00484.1"/>
    <property type="match status" value="1"/>
</dbReference>
<dbReference type="PANTHER" id="PTHR42918:SF9">
    <property type="entry name" value="LYSINE--TRNA LIGASE"/>
    <property type="match status" value="1"/>
</dbReference>
<dbReference type="PANTHER" id="PTHR42918">
    <property type="entry name" value="LYSYL-TRNA SYNTHETASE"/>
    <property type="match status" value="1"/>
</dbReference>
<dbReference type="Pfam" id="PF00152">
    <property type="entry name" value="tRNA-synt_2"/>
    <property type="match status" value="1"/>
</dbReference>
<dbReference type="Pfam" id="PF01336">
    <property type="entry name" value="tRNA_anti-codon"/>
    <property type="match status" value="1"/>
</dbReference>
<dbReference type="PIRSF" id="PIRSF039101">
    <property type="entry name" value="LysRS2"/>
    <property type="match status" value="1"/>
</dbReference>
<dbReference type="PRINTS" id="PR00982">
    <property type="entry name" value="TRNASYNTHLYS"/>
</dbReference>
<dbReference type="SUPFAM" id="SSF55681">
    <property type="entry name" value="Class II aaRS and biotin synthetases"/>
    <property type="match status" value="1"/>
</dbReference>
<dbReference type="SUPFAM" id="SSF50249">
    <property type="entry name" value="Nucleic acid-binding proteins"/>
    <property type="match status" value="1"/>
</dbReference>
<dbReference type="PROSITE" id="PS50862">
    <property type="entry name" value="AA_TRNA_LIGASE_II"/>
    <property type="match status" value="1"/>
</dbReference>
<keyword id="KW-0002">3D-structure</keyword>
<keyword id="KW-0007">Acetylation</keyword>
<keyword id="KW-0025">Alternative splicing</keyword>
<keyword id="KW-0030">Aminoacyl-tRNA synthetase</keyword>
<keyword id="KW-0067">ATP-binding</keyword>
<keyword id="KW-1003">Cell membrane</keyword>
<keyword id="KW-0144">Charcot-Marie-Tooth disease</keyword>
<keyword id="KW-0963">Cytoplasm</keyword>
<keyword id="KW-0209">Deafness</keyword>
<keyword id="KW-0903">Direct protein sequencing</keyword>
<keyword id="KW-0225">Disease variant</keyword>
<keyword id="KW-0945">Host-virus interaction</keyword>
<keyword id="KW-0991">Intellectual disability</keyword>
<keyword id="KW-0436">Ligase</keyword>
<keyword id="KW-0472">Membrane</keyword>
<keyword id="KW-0496">Mitochondrion</keyword>
<keyword id="KW-0523">Neurodegeneration</keyword>
<keyword id="KW-0622">Neuropathy</keyword>
<keyword id="KW-1010">Non-syndromic deafness</keyword>
<keyword id="KW-0547">Nucleotide-binding</keyword>
<keyword id="KW-0539">Nucleus</keyword>
<keyword id="KW-0597">Phosphoprotein</keyword>
<keyword id="KW-0648">Protein biosynthesis</keyword>
<keyword id="KW-1267">Proteomics identification</keyword>
<keyword id="KW-1185">Reference proteome</keyword>
<keyword id="KW-0964">Secreted</keyword>
<keyword id="KW-0808">Transferase</keyword>
<accession>Q15046</accession>
<accession>A8MSK1</accession>
<accession>D3DUK4</accession>
<accession>O14946</accession>
<accession>Q96J25</accession>
<accession>Q9HB23</accession>
<protein>
    <recommendedName>
        <fullName>Lysine--tRNA ligase</fullName>
        <ecNumber evidence="13 15 27">2.7.7.-</ecNumber>
        <ecNumber evidence="9 15 29">6.1.1.6</ecNumber>
    </recommendedName>
    <alternativeName>
        <fullName>Lysyl-tRNA synthetase</fullName>
        <shortName>LysRS</shortName>
    </alternativeName>
</protein>
<gene>
    <name evidence="35" type="primary">KARS1</name>
    <name type="synonym">KARS</name>
    <name type="synonym">KIAA0070</name>
</gene>